<sequence>MAHPLIPAILDLARPIADDLDLEVVQAVFHTNQSPPILRLDIRSRVGDTGLEDCERMSRSFELALDEANIIPDAYVLEISSPGLSDTLESDRDFLSFKGFPVQVTSRSPNDDTVEQQGTLLGRDADSVYLNKRGRTVRIARSQVLEVKLIEQL</sequence>
<dbReference type="EMBL" id="AP008231">
    <property type="protein sequence ID" value="BAD80262.1"/>
    <property type="molecule type" value="Genomic_DNA"/>
</dbReference>
<dbReference type="RefSeq" id="WP_011244382.1">
    <property type="nucleotide sequence ID" value="NZ_CP085785.1"/>
</dbReference>
<dbReference type="SMR" id="Q5N0A8"/>
<dbReference type="GeneID" id="72430898"/>
<dbReference type="KEGG" id="syc:syc2072_d"/>
<dbReference type="eggNOG" id="COG0779">
    <property type="taxonomic scope" value="Bacteria"/>
</dbReference>
<dbReference type="Proteomes" id="UP000001175">
    <property type="component" value="Chromosome"/>
</dbReference>
<dbReference type="GO" id="GO:0005829">
    <property type="term" value="C:cytosol"/>
    <property type="evidence" value="ECO:0007669"/>
    <property type="project" value="TreeGrafter"/>
</dbReference>
<dbReference type="GO" id="GO:0000028">
    <property type="term" value="P:ribosomal small subunit assembly"/>
    <property type="evidence" value="ECO:0007669"/>
    <property type="project" value="TreeGrafter"/>
</dbReference>
<dbReference type="GO" id="GO:0006412">
    <property type="term" value="P:translation"/>
    <property type="evidence" value="ECO:0007669"/>
    <property type="project" value="TreeGrafter"/>
</dbReference>
<dbReference type="Gene3D" id="3.30.300.70">
    <property type="entry name" value="RimP-like superfamily, N-terminal"/>
    <property type="match status" value="1"/>
</dbReference>
<dbReference type="HAMAP" id="MF_01077">
    <property type="entry name" value="RimP"/>
    <property type="match status" value="1"/>
</dbReference>
<dbReference type="InterPro" id="IPR003728">
    <property type="entry name" value="Ribosome_maturation_RimP"/>
</dbReference>
<dbReference type="InterPro" id="IPR036847">
    <property type="entry name" value="RimP_C_sf"/>
</dbReference>
<dbReference type="InterPro" id="IPR028989">
    <property type="entry name" value="RimP_N"/>
</dbReference>
<dbReference type="InterPro" id="IPR035956">
    <property type="entry name" value="RimP_N_sf"/>
</dbReference>
<dbReference type="NCBIfam" id="NF000935">
    <property type="entry name" value="PRK00092.3-3"/>
    <property type="match status" value="1"/>
</dbReference>
<dbReference type="PANTHER" id="PTHR33867">
    <property type="entry name" value="RIBOSOME MATURATION FACTOR RIMP"/>
    <property type="match status" value="1"/>
</dbReference>
<dbReference type="PANTHER" id="PTHR33867:SF1">
    <property type="entry name" value="RIBOSOME MATURATION FACTOR RIMP"/>
    <property type="match status" value="1"/>
</dbReference>
<dbReference type="Pfam" id="PF02576">
    <property type="entry name" value="RimP_N"/>
    <property type="match status" value="1"/>
</dbReference>
<dbReference type="SUPFAM" id="SSF74942">
    <property type="entry name" value="YhbC-like, C-terminal domain"/>
    <property type="match status" value="1"/>
</dbReference>
<dbReference type="SUPFAM" id="SSF75420">
    <property type="entry name" value="YhbC-like, N-terminal domain"/>
    <property type="match status" value="1"/>
</dbReference>
<keyword id="KW-0963">Cytoplasm</keyword>
<keyword id="KW-0690">Ribosome biogenesis</keyword>
<proteinExistence type="inferred from homology"/>
<comment type="function">
    <text evidence="1">Required for maturation of 30S ribosomal subunits.</text>
</comment>
<comment type="subcellular location">
    <subcellularLocation>
        <location evidence="1">Cytoplasm</location>
    </subcellularLocation>
</comment>
<comment type="similarity">
    <text evidence="1">Belongs to the RimP family.</text>
</comment>
<gene>
    <name evidence="1" type="primary">rimP</name>
    <name type="ordered locus">syc2072_d</name>
</gene>
<feature type="chain" id="PRO_0000229286" description="Ribosome maturation factor RimP">
    <location>
        <begin position="1"/>
        <end position="153"/>
    </location>
</feature>
<name>RIMP_SYNP6</name>
<organism>
    <name type="scientific">Synechococcus sp. (strain ATCC 27144 / PCC 6301 / SAUG 1402/1)</name>
    <name type="common">Anacystis nidulans</name>
    <dbReference type="NCBI Taxonomy" id="269084"/>
    <lineage>
        <taxon>Bacteria</taxon>
        <taxon>Bacillati</taxon>
        <taxon>Cyanobacteriota</taxon>
        <taxon>Cyanophyceae</taxon>
        <taxon>Synechococcales</taxon>
        <taxon>Synechococcaceae</taxon>
        <taxon>Synechococcus</taxon>
    </lineage>
</organism>
<reference key="1">
    <citation type="journal article" date="2007" name="Photosyn. Res.">
        <title>Complete nucleotide sequence of the freshwater unicellular cyanobacterium Synechococcus elongatus PCC 6301 chromosome: gene content and organization.</title>
        <authorList>
            <person name="Sugita C."/>
            <person name="Ogata K."/>
            <person name="Shikata M."/>
            <person name="Jikuya H."/>
            <person name="Takano J."/>
            <person name="Furumichi M."/>
            <person name="Kanehisa M."/>
            <person name="Omata T."/>
            <person name="Sugiura M."/>
            <person name="Sugita M."/>
        </authorList>
    </citation>
    <scope>NUCLEOTIDE SEQUENCE [LARGE SCALE GENOMIC DNA]</scope>
    <source>
        <strain>ATCC 27144 / PCC 6301 / SAUG 1402/1</strain>
    </source>
</reference>
<evidence type="ECO:0000255" key="1">
    <source>
        <dbReference type="HAMAP-Rule" id="MF_01077"/>
    </source>
</evidence>
<protein>
    <recommendedName>
        <fullName evidence="1">Ribosome maturation factor RimP</fullName>
    </recommendedName>
</protein>
<accession>Q5N0A8</accession>